<dbReference type="EC" id="2.7.1.121" evidence="2"/>
<dbReference type="EMBL" id="U00096">
    <property type="protein sequence ID" value="AAC74283.1"/>
    <property type="molecule type" value="Genomic_DNA"/>
</dbReference>
<dbReference type="EMBL" id="AP009048">
    <property type="protein sequence ID" value="BAA36056.2"/>
    <property type="molecule type" value="Genomic_DNA"/>
</dbReference>
<dbReference type="PIR" id="D64866">
    <property type="entry name" value="D64866"/>
</dbReference>
<dbReference type="RefSeq" id="NP_415717.1">
    <property type="nucleotide sequence ID" value="NC_000913.3"/>
</dbReference>
<dbReference type="RefSeq" id="WP_000059411.1">
    <property type="nucleotide sequence ID" value="NZ_SSZK01000010.1"/>
</dbReference>
<dbReference type="PDB" id="2BTD">
    <property type="method" value="X-ray"/>
    <property type="resolution" value="2.60 A"/>
    <property type="chains" value="A=1-210"/>
</dbReference>
<dbReference type="PDB" id="3PNL">
    <property type="method" value="X-ray"/>
    <property type="resolution" value="2.20 A"/>
    <property type="chains" value="B=2-210"/>
</dbReference>
<dbReference type="PDB" id="4LRZ">
    <property type="method" value="X-ray"/>
    <property type="resolution" value="2.32 A"/>
    <property type="chains" value="A/B/C/D=2-210"/>
</dbReference>
<dbReference type="PDBsum" id="2BTD"/>
<dbReference type="PDBsum" id="3PNL"/>
<dbReference type="PDBsum" id="4LRZ"/>
<dbReference type="SMR" id="P76014"/>
<dbReference type="BioGRID" id="4260762">
    <property type="interactions" value="26"/>
</dbReference>
<dbReference type="ComplexPortal" id="CPX-2634">
    <property type="entry name" value="Dha Kinase"/>
</dbReference>
<dbReference type="DIP" id="DIP-11562N"/>
<dbReference type="FunCoup" id="P76014">
    <property type="interactions" value="44"/>
</dbReference>
<dbReference type="IntAct" id="P76014">
    <property type="interactions" value="2"/>
</dbReference>
<dbReference type="STRING" id="511145.b1199"/>
<dbReference type="MoonProt" id="P76014"/>
<dbReference type="jPOST" id="P76014"/>
<dbReference type="PaxDb" id="511145-b1199"/>
<dbReference type="EnsemblBacteria" id="AAC74283">
    <property type="protein sequence ID" value="AAC74283"/>
    <property type="gene ID" value="b1199"/>
</dbReference>
<dbReference type="GeneID" id="945748"/>
<dbReference type="KEGG" id="ecj:JW5186"/>
<dbReference type="KEGG" id="eco:b1199"/>
<dbReference type="KEGG" id="ecoc:C3026_07050"/>
<dbReference type="PATRIC" id="fig|1411691.4.peg.1086"/>
<dbReference type="EchoBASE" id="EB3659"/>
<dbReference type="eggNOG" id="COG1461">
    <property type="taxonomic scope" value="Bacteria"/>
</dbReference>
<dbReference type="HOGENOM" id="CLU_066424_5_0_6"/>
<dbReference type="InParanoid" id="P76014"/>
<dbReference type="OMA" id="FFRRWMT"/>
<dbReference type="OrthoDB" id="9800291at2"/>
<dbReference type="PhylomeDB" id="P76014"/>
<dbReference type="BioCyc" id="EcoCyc:MONOMER0-1261"/>
<dbReference type="BioCyc" id="MetaCyc:MONOMER0-1261"/>
<dbReference type="BRENDA" id="2.7.1.121">
    <property type="organism ID" value="2026"/>
</dbReference>
<dbReference type="BRENDA" id="2.7.1.29">
    <property type="organism ID" value="2026"/>
</dbReference>
<dbReference type="SABIO-RK" id="P76014"/>
<dbReference type="UniPathway" id="UPA00616"/>
<dbReference type="EvolutionaryTrace" id="P76014"/>
<dbReference type="PRO" id="PR:P76014"/>
<dbReference type="Proteomes" id="UP000000625">
    <property type="component" value="Chromosome"/>
</dbReference>
<dbReference type="GO" id="GO:0005829">
    <property type="term" value="C:cytosol"/>
    <property type="evidence" value="ECO:0000314"/>
    <property type="project" value="EcoCyc"/>
</dbReference>
<dbReference type="GO" id="GO:1990234">
    <property type="term" value="C:transferase complex"/>
    <property type="evidence" value="ECO:0000353"/>
    <property type="project" value="ComplexPortal"/>
</dbReference>
<dbReference type="GO" id="GO:0043531">
    <property type="term" value="F:ADP binding"/>
    <property type="evidence" value="ECO:0000314"/>
    <property type="project" value="EcoCyc"/>
</dbReference>
<dbReference type="GO" id="GO:0005524">
    <property type="term" value="F:ATP binding"/>
    <property type="evidence" value="ECO:0000314"/>
    <property type="project" value="UniProtKB"/>
</dbReference>
<dbReference type="GO" id="GO:0004371">
    <property type="term" value="F:glycerone kinase activity"/>
    <property type="evidence" value="ECO:0007669"/>
    <property type="project" value="InterPro"/>
</dbReference>
<dbReference type="GO" id="GO:0000287">
    <property type="term" value="F:magnesium ion binding"/>
    <property type="evidence" value="ECO:0000314"/>
    <property type="project" value="UniProtKB"/>
</dbReference>
<dbReference type="GO" id="GO:0047324">
    <property type="term" value="F:phosphoenolpyruvate-glycerone phosphotransferase activity"/>
    <property type="evidence" value="ECO:0000250"/>
    <property type="project" value="UniProtKB"/>
</dbReference>
<dbReference type="GO" id="GO:0046835">
    <property type="term" value="P:carbohydrate phosphorylation"/>
    <property type="evidence" value="ECO:0000314"/>
    <property type="project" value="ComplexPortal"/>
</dbReference>
<dbReference type="GO" id="GO:0019563">
    <property type="term" value="P:glycerol catabolic process"/>
    <property type="evidence" value="ECO:0007669"/>
    <property type="project" value="UniProtKB-UniPathway"/>
</dbReference>
<dbReference type="GO" id="GO:0006090">
    <property type="term" value="P:pyruvate metabolic process"/>
    <property type="evidence" value="ECO:0000314"/>
    <property type="project" value="ComplexPortal"/>
</dbReference>
<dbReference type="FunFam" id="1.25.40.340:FF:000003">
    <property type="entry name" value="Dihydroxyacetone kinase subunit DhaL"/>
    <property type="match status" value="1"/>
</dbReference>
<dbReference type="Gene3D" id="1.25.40.340">
    <property type="match status" value="1"/>
</dbReference>
<dbReference type="InterPro" id="IPR012737">
    <property type="entry name" value="DhaK_L_YcgS"/>
</dbReference>
<dbReference type="InterPro" id="IPR004007">
    <property type="entry name" value="DhaL_dom"/>
</dbReference>
<dbReference type="InterPro" id="IPR036117">
    <property type="entry name" value="DhaL_dom_sf"/>
</dbReference>
<dbReference type="InterPro" id="IPR050861">
    <property type="entry name" value="Dihydroxyacetone_Kinase"/>
</dbReference>
<dbReference type="NCBIfam" id="TIGR02365">
    <property type="entry name" value="dha_L_ycgS"/>
    <property type="match status" value="1"/>
</dbReference>
<dbReference type="PANTHER" id="PTHR28629">
    <property type="entry name" value="TRIOKINASE/FMN CYCLASE"/>
    <property type="match status" value="1"/>
</dbReference>
<dbReference type="PANTHER" id="PTHR28629:SF4">
    <property type="entry name" value="TRIOKINASE_FMN CYCLASE"/>
    <property type="match status" value="1"/>
</dbReference>
<dbReference type="Pfam" id="PF02734">
    <property type="entry name" value="Dak2"/>
    <property type="match status" value="1"/>
</dbReference>
<dbReference type="SMART" id="SM01120">
    <property type="entry name" value="Dak2"/>
    <property type="match status" value="1"/>
</dbReference>
<dbReference type="SUPFAM" id="SSF101473">
    <property type="entry name" value="DhaL-like"/>
    <property type="match status" value="1"/>
</dbReference>
<dbReference type="PROSITE" id="PS51480">
    <property type="entry name" value="DHAL"/>
    <property type="match status" value="1"/>
</dbReference>
<gene>
    <name evidence="8" type="primary">dhaL</name>
    <name type="synonym">ycgS</name>
    <name type="ordered locus">b1199</name>
    <name type="ordered locus">JW5186</name>
</gene>
<proteinExistence type="evidence at protein level"/>
<evidence type="ECO:0000255" key="1">
    <source>
        <dbReference type="PROSITE-ProRule" id="PRU00813"/>
    </source>
</evidence>
<evidence type="ECO:0000269" key="2">
    <source>
    </source>
</evidence>
<evidence type="ECO:0000269" key="3">
    <source>
    </source>
</evidence>
<evidence type="ECO:0000269" key="4">
    <source>
    </source>
</evidence>
<evidence type="ECO:0000269" key="5">
    <source>
    </source>
</evidence>
<evidence type="ECO:0000269" key="6">
    <source>
    </source>
</evidence>
<evidence type="ECO:0000269" key="7">
    <source>
    </source>
</evidence>
<evidence type="ECO:0000303" key="8">
    <source>
    </source>
</evidence>
<evidence type="ECO:0000305" key="9"/>
<evidence type="ECO:0000305" key="10">
    <source>
    </source>
</evidence>
<evidence type="ECO:0007744" key="11">
    <source>
        <dbReference type="PDB" id="2BTD"/>
    </source>
</evidence>
<evidence type="ECO:0007744" key="12">
    <source>
        <dbReference type="PDB" id="3PNL"/>
    </source>
</evidence>
<evidence type="ECO:0007744" key="13">
    <source>
        <dbReference type="PDB" id="4LRZ"/>
    </source>
</evidence>
<evidence type="ECO:0007829" key="14">
    <source>
        <dbReference type="PDB" id="3PNL"/>
    </source>
</evidence>
<evidence type="ECO:0007829" key="15">
    <source>
        <dbReference type="PDB" id="4LRZ"/>
    </source>
</evidence>
<feature type="chain" id="PRO_0000121530" description="PEP-dependent dihydroxyacetone kinase, ADP-binding subunit DhaL">
    <location>
        <begin position="1"/>
        <end position="210"/>
    </location>
</feature>
<feature type="domain" description="DhaL" evidence="1">
    <location>
        <begin position="6"/>
        <end position="206"/>
    </location>
</feature>
<feature type="binding site" evidence="5 7 11 13">
    <location>
        <position position="30"/>
    </location>
    <ligand>
        <name>Mg(2+)</name>
        <dbReference type="ChEBI" id="CHEBI:18420"/>
    </ligand>
</feature>
<feature type="binding site" evidence="5 6 7 11 12 13">
    <location>
        <position position="35"/>
    </location>
    <ligand>
        <name>Mg(2+)</name>
        <dbReference type="ChEBI" id="CHEBI:18420"/>
    </ligand>
</feature>
<feature type="binding site" evidence="5 6 7 11 12 13">
    <location>
        <position position="37"/>
    </location>
    <ligand>
        <name>Mg(2+)</name>
        <dbReference type="ChEBI" id="CHEBI:18420"/>
    </ligand>
</feature>
<feature type="binding site" evidence="5 6 7 11 12 13">
    <location>
        <begin position="38"/>
        <end position="41"/>
    </location>
    <ligand>
        <name>ADP</name>
        <dbReference type="ChEBI" id="CHEBI:456216"/>
    </ligand>
</feature>
<feature type="binding site" evidence="5 6 7 11 12 13">
    <location>
        <begin position="79"/>
        <end position="80"/>
    </location>
    <ligand>
        <name>ADP</name>
        <dbReference type="ChEBI" id="CHEBI:456216"/>
    </ligand>
</feature>
<feature type="binding site" evidence="5 6 7 11 12 13">
    <location>
        <position position="121"/>
    </location>
    <ligand>
        <name>ADP</name>
        <dbReference type="ChEBI" id="CHEBI:456216"/>
    </ligand>
</feature>
<feature type="binding site" evidence="5 6 7 11 12 13">
    <location>
        <position position="130"/>
    </location>
    <ligand>
        <name>ADP</name>
        <dbReference type="ChEBI" id="CHEBI:456216"/>
    </ligand>
</feature>
<feature type="binding site" evidence="5 10 11">
    <location>
        <position position="178"/>
    </location>
    <ligand>
        <name>ADP</name>
        <dbReference type="ChEBI" id="CHEBI:456216"/>
    </ligand>
</feature>
<feature type="binding site" evidence="5 6 7 11 12 13">
    <location>
        <begin position="191"/>
        <end position="193"/>
    </location>
    <ligand>
        <name>ADP</name>
        <dbReference type="ChEBI" id="CHEBI:456216"/>
    </ligand>
</feature>
<feature type="strand" evidence="14">
    <location>
        <begin position="2"/>
        <end position="4"/>
    </location>
</feature>
<feature type="helix" evidence="14">
    <location>
        <begin position="5"/>
        <end position="21"/>
    </location>
</feature>
<feature type="helix" evidence="14">
    <location>
        <begin position="23"/>
        <end position="32"/>
    </location>
</feature>
<feature type="strand" evidence="15">
    <location>
        <begin position="34"/>
        <end position="36"/>
    </location>
</feature>
<feature type="helix" evidence="14">
    <location>
        <begin position="38"/>
        <end position="52"/>
    </location>
</feature>
<feature type="helix" evidence="14">
    <location>
        <begin position="54"/>
        <end position="56"/>
    </location>
</feature>
<feature type="helix" evidence="14">
    <location>
        <begin position="61"/>
        <end position="73"/>
    </location>
</feature>
<feature type="helix" evidence="14">
    <location>
        <begin position="80"/>
        <end position="95"/>
    </location>
</feature>
<feature type="strand" evidence="14">
    <location>
        <begin position="99"/>
        <end position="102"/>
    </location>
</feature>
<feature type="helix" evidence="14">
    <location>
        <begin position="103"/>
        <end position="121"/>
    </location>
</feature>
<feature type="strand" evidence="14">
    <location>
        <begin position="127"/>
        <end position="129"/>
    </location>
</feature>
<feature type="helix" evidence="14">
    <location>
        <begin position="131"/>
        <end position="146"/>
    </location>
</feature>
<feature type="helix" evidence="14">
    <location>
        <begin position="151"/>
        <end position="168"/>
    </location>
</feature>
<feature type="helix" evidence="14">
    <location>
        <begin position="169"/>
        <end position="171"/>
    </location>
</feature>
<feature type="helix" evidence="14">
    <location>
        <begin position="178"/>
        <end position="186"/>
    </location>
</feature>
<feature type="helix" evidence="14">
    <location>
        <begin position="192"/>
        <end position="208"/>
    </location>
</feature>
<name>DHAL_ECOLI</name>
<keyword id="KW-0002">3D-structure</keyword>
<keyword id="KW-0067">ATP-binding</keyword>
<keyword id="KW-0963">Cytoplasm</keyword>
<keyword id="KW-0319">Glycerol metabolism</keyword>
<keyword id="KW-0418">Kinase</keyword>
<keyword id="KW-0460">Magnesium</keyword>
<keyword id="KW-0479">Metal-binding</keyword>
<keyword id="KW-0547">Nucleotide-binding</keyword>
<keyword id="KW-1185">Reference proteome</keyword>
<keyword id="KW-0808">Transferase</keyword>
<accession>P76014</accession>
<comment type="function">
    <text evidence="2 3">ADP-binding subunit of the dihydroxyacetone kinase, which is responsible for the phosphoenolpyruvate (PEP)-dependent phosphorylation of dihydroxyacetone (PubMed:11350937). DhaL-ADP is converted to DhaL-ATP via a phosphoryl group transfer from DhaM and transmits it to dihydroxyacetone bound to DhaK (PubMed:11350937). DhaL also acts as coactivator of the transcription activator DhaR by binding to the sensor domain of DhaR (PubMed:15616579). In the presence of dihydroxyacetone, DhaL-ADP displaces DhaK and stimulates DhaR activity (PubMed:15616579). In the absence of dihydroxyacetone, DhaL-ADP is converted by the PTS to DhaL-ATP, which does not bind to DhaR (PubMed:15616579).</text>
</comment>
<comment type="catalytic activity">
    <reaction evidence="2">
        <text>dihydroxyacetone + phosphoenolpyruvate = dihydroxyacetone phosphate + pyruvate</text>
        <dbReference type="Rhea" id="RHEA:18381"/>
        <dbReference type="ChEBI" id="CHEBI:15361"/>
        <dbReference type="ChEBI" id="CHEBI:16016"/>
        <dbReference type="ChEBI" id="CHEBI:57642"/>
        <dbReference type="ChEBI" id="CHEBI:58702"/>
        <dbReference type="EC" id="2.7.1.121"/>
    </reaction>
</comment>
<comment type="cofactor">
    <cofactor evidence="5 6 7">
        <name>Mg(2+)</name>
        <dbReference type="ChEBI" id="CHEBI:18420"/>
    </cofactor>
</comment>
<comment type="biophysicochemical properties">
    <kinetics>
        <KM evidence="2">45 uM for dihydroxyacetone</KM>
        <text evidence="2">kcat is 2.8 sec(-1). Values measured with the DhaKLM complex.</text>
    </kinetics>
    <temperatureDependence>
        <text evidence="4">Complexation with ADP increases the thermal unfolding temperature from 40 to 65 degrees Celsius.</text>
    </temperatureDependence>
</comment>
<comment type="pathway">
    <text evidence="9">Polyol metabolism; glycerol degradation.</text>
</comment>
<comment type="subunit">
    <text evidence="5 6 7">Homodimer (PubMed:16647083, PubMed:21209328, PubMed:24440518). The dihydroxyacetone kinase complex is composed of a homodimer of DhaM, a homodimer of DhaK and the subunit DhaL (PubMed:16647083, PubMed:21209328). DhaL also forms a complex with DhaR (PubMed:24440518).</text>
</comment>
<comment type="interaction">
    <interactant intactId="EBI-9021529">
        <id>P76014</id>
    </interactant>
    <interactant intactId="EBI-544485">
        <id>P76015</id>
        <label>dhaK</label>
    </interactant>
    <organismsDiffer>false</organismsDiffer>
    <experiments>2</experiments>
</comment>
<comment type="interaction">
    <interactant intactId="EBI-9021529">
        <id>P76014</id>
    </interactant>
    <interactant intactId="EBI-9153808">
        <id>P76016</id>
        <label>dhaR</label>
    </interactant>
    <organismsDiffer>false</organismsDiffer>
    <experiments>3</experiments>
</comment>
<comment type="subcellular location">
    <subcellularLocation>
        <location evidence="9">Cytoplasm</location>
    </subcellularLocation>
</comment>
<comment type="induction">
    <text evidence="3 7">Activated by DhaR.</text>
</comment>
<comment type="miscellaneous">
    <text evidence="9">Unlike the carbohydrate-specific transporters of the PTS, the complex DhaKML has no transport activity.</text>
</comment>
<comment type="miscellaneous">
    <text evidence="4">The tightly bound ADP participates in a double displacement phosphoryl transfer reaction and thus plays the same role as histidines, cysteines and aspartic acids in other phosphoprotein intermediates.</text>
</comment>
<reference key="1">
    <citation type="journal article" date="1996" name="DNA Res.">
        <title>A 718-kb DNA sequence of the Escherichia coli K-12 genome corresponding to the 12.7-28.0 min region on the linkage map.</title>
        <authorList>
            <person name="Oshima T."/>
            <person name="Aiba H."/>
            <person name="Baba T."/>
            <person name="Fujita K."/>
            <person name="Hayashi K."/>
            <person name="Honjo A."/>
            <person name="Ikemoto K."/>
            <person name="Inada T."/>
            <person name="Itoh T."/>
            <person name="Kajihara M."/>
            <person name="Kanai K."/>
            <person name="Kashimoto K."/>
            <person name="Kimura S."/>
            <person name="Kitagawa M."/>
            <person name="Makino K."/>
            <person name="Masuda S."/>
            <person name="Miki T."/>
            <person name="Mizobuchi K."/>
            <person name="Mori H."/>
            <person name="Motomura K."/>
            <person name="Nakamura Y."/>
            <person name="Nashimoto H."/>
            <person name="Nishio Y."/>
            <person name="Saito N."/>
            <person name="Sampei G."/>
            <person name="Seki Y."/>
            <person name="Tagami H."/>
            <person name="Takemoto K."/>
            <person name="Wada C."/>
            <person name="Yamamoto Y."/>
            <person name="Yano M."/>
            <person name="Horiuchi T."/>
        </authorList>
    </citation>
    <scope>NUCLEOTIDE SEQUENCE [LARGE SCALE GENOMIC DNA]</scope>
    <source>
        <strain>K12 / W3110 / ATCC 27325 / DSM 5911</strain>
    </source>
</reference>
<reference key="2">
    <citation type="journal article" date="1997" name="Science">
        <title>The complete genome sequence of Escherichia coli K-12.</title>
        <authorList>
            <person name="Blattner F.R."/>
            <person name="Plunkett G. III"/>
            <person name="Bloch C.A."/>
            <person name="Perna N.T."/>
            <person name="Burland V."/>
            <person name="Riley M."/>
            <person name="Collado-Vides J."/>
            <person name="Glasner J.D."/>
            <person name="Rode C.K."/>
            <person name="Mayhew G.F."/>
            <person name="Gregor J."/>
            <person name="Davis N.W."/>
            <person name="Kirkpatrick H.A."/>
            <person name="Goeden M.A."/>
            <person name="Rose D.J."/>
            <person name="Mau B."/>
            <person name="Shao Y."/>
        </authorList>
    </citation>
    <scope>NUCLEOTIDE SEQUENCE [LARGE SCALE GENOMIC DNA]</scope>
    <source>
        <strain>K12 / MG1655 / ATCC 47076</strain>
    </source>
</reference>
<reference key="3">
    <citation type="journal article" date="2006" name="Mol. Syst. Biol.">
        <title>Highly accurate genome sequences of Escherichia coli K-12 strains MG1655 and W3110.</title>
        <authorList>
            <person name="Hayashi K."/>
            <person name="Morooka N."/>
            <person name="Yamamoto Y."/>
            <person name="Fujita K."/>
            <person name="Isono K."/>
            <person name="Choi S."/>
            <person name="Ohtsubo E."/>
            <person name="Baba T."/>
            <person name="Wanner B.L."/>
            <person name="Mori H."/>
            <person name="Horiuchi T."/>
        </authorList>
    </citation>
    <scope>NUCLEOTIDE SEQUENCE [LARGE SCALE GENOMIC DNA]</scope>
    <source>
        <strain>K12 / W3110 / ATCC 27325 / DSM 5911</strain>
    </source>
</reference>
<reference key="4">
    <citation type="journal article" date="1999" name="Electrophoresis">
        <title>Enrichment of low abundance proteins of Escherichia coli by hydroxyapatite chromatography.</title>
        <authorList>
            <person name="Fountoulakis M."/>
            <person name="Takacs M.-F."/>
            <person name="Berndt P."/>
            <person name="Langen H."/>
            <person name="Takacs B."/>
        </authorList>
    </citation>
    <scope>IDENTIFICATION BY MASS SPECTROMETRY</scope>
    <source>
        <strain>B / BL21</strain>
    </source>
</reference>
<reference key="5">
    <citation type="journal article" date="2001" name="EMBO J.">
        <title>The dihydroxyacetone kinase of Escherichia coli utilizes a phosphoprotein instead of ATP as phosphoryl donor.</title>
        <authorList>
            <person name="Gutknecht R."/>
            <person name="Beutler R."/>
            <person name="Garcia-Alles L.F."/>
            <person name="Baumann U."/>
            <person name="Erni B."/>
        </authorList>
    </citation>
    <scope>FUNCTION</scope>
    <scope>CATALYTIC ACTIVITY OF THE COMPLEX</scope>
    <scope>BIOPHYSICOCHEMICAL PROPERTIES</scope>
</reference>
<reference key="6">
    <citation type="journal article" date="2005" name="J. Biol. Chem.">
        <title>From ATP as substrate to ADP as coenzyme: functional evolution of the nucleotide binding subunit of dihydroxyacetone kinases.</title>
        <authorList>
            <person name="Baechler C."/>
            <person name="Fluekiger-Bruehwiler K."/>
            <person name="Schneider P."/>
            <person name="Baehler P."/>
            <person name="Erni B."/>
        </authorList>
    </citation>
    <scope>ROLE OF ADP</scope>
    <scope>BIOPHYSICOCHEMICAL PROPERTIES</scope>
</reference>
<reference key="7">
    <citation type="journal article" date="2005" name="EMBO J.">
        <title>Escherichia coli dihydroxyacetone kinase controls gene expression by binding to transcription factor DhaR.</title>
        <authorList>
            <person name="Baechler C."/>
            <person name="Schneider P."/>
            <person name="Baehler P."/>
            <person name="Lustig A."/>
            <person name="Erni B."/>
        </authorList>
    </citation>
    <scope>FUNCTION</scope>
    <scope>INDUCTION</scope>
</reference>
<reference key="8">
    <citation type="journal article" date="2006" name="J. Mol. Biol.">
        <title>Crystal structure of the nucleotide-binding subunit DhaL of the Escherichia coli dihydroxyacetone kinase.</title>
        <authorList>
            <person name="Oberholzer A.E."/>
            <person name="Schneider P."/>
            <person name="Baumann U."/>
            <person name="Erni B."/>
        </authorList>
    </citation>
    <scope>X-RAY CRYSTALLOGRAPHY (2.6 ANGSTROMS) IN COMPLEX WITH ADP AND MAGNESIUM ION</scope>
    <scope>COFACTOR</scope>
    <scope>SUBUNIT</scope>
</reference>
<reference key="9">
    <citation type="journal article" date="2011" name="Proc. Natl. Acad. Sci. U.S.A.">
        <title>Structural and mechanistic insight into covalent substrate binding by Escherichia coli dihydroxyacetone kinase.</title>
        <authorList>
            <person name="Shi R."/>
            <person name="McDonald L."/>
            <person name="Cui Q."/>
            <person name="Matte A."/>
            <person name="Cygler M."/>
            <person name="Ekiel I."/>
        </authorList>
    </citation>
    <scope>X-RAY CRYSTALLOGRAPHY (2.20 ANGSTROMS) OF 2-210 IN COMPLEX WITH ADP AND MAGNESIUM ION</scope>
    <scope>COFACTOR</scope>
    <scope>SUBUNIT</scope>
    <scope>REACTION MECHANISM</scope>
</reference>
<reference key="10">
    <citation type="journal article" date="2014" name="Structure">
        <title>Coiled-coil helix rotation selects repressing or activating state of transcriptional regulator DhaR.</title>
        <authorList>
            <person name="Shi R."/>
            <person name="McDonald L."/>
            <person name="Cygler M."/>
            <person name="Ekiel I."/>
        </authorList>
    </citation>
    <scope>X-RAY CRYSTALLOGRAPHY (2.32 ANGSTROMS) OF 2-210 IN COMPLEX WITH DHAR; ADP AND MAGNESIUM</scope>
    <scope>COFACTOR</scope>
    <scope>INDUCTION</scope>
    <scope>SUBUNIT</scope>
</reference>
<sequence length="210" mass="22632">MSLSRTQIVNWLTRCGDIFSTESEYLTGLDREIGDADHGLNMNRGFSKVVEKLPAIADKDIGFILKNTGMTLLSSVGGASGPLFGTFFIRAAQATQARQSLTLEELYQMFRDGADGVISRGKAEPGDKTMCDVWVPVVESLRQSSEQNLSVPVALEAASSIAESAAQSTITMQARKGRASYLGERSIGHQDPGATSVMFMMQMLALAAKE</sequence>
<organism>
    <name type="scientific">Escherichia coli (strain K12)</name>
    <dbReference type="NCBI Taxonomy" id="83333"/>
    <lineage>
        <taxon>Bacteria</taxon>
        <taxon>Pseudomonadati</taxon>
        <taxon>Pseudomonadota</taxon>
        <taxon>Gammaproteobacteria</taxon>
        <taxon>Enterobacterales</taxon>
        <taxon>Enterobacteriaceae</taxon>
        <taxon>Escherichia</taxon>
    </lineage>
</organism>
<protein>
    <recommendedName>
        <fullName evidence="8">PEP-dependent dihydroxyacetone kinase, ADP-binding subunit DhaL</fullName>
        <ecNumber evidence="2">2.7.1.121</ecNumber>
    </recommendedName>
</protein>